<organism>
    <name type="scientific">Lake Victoria marburgvirus (strain Musoke-80)</name>
    <name type="common">MARV</name>
    <name type="synonym">Marburg virus (strain Kenya/Musoke/1980)</name>
    <dbReference type="NCBI Taxonomy" id="33727"/>
    <lineage>
        <taxon>Viruses</taxon>
        <taxon>Riboviria</taxon>
        <taxon>Orthornavirae</taxon>
        <taxon>Negarnaviricota</taxon>
        <taxon>Haploviricotina</taxon>
        <taxon>Monjiviricetes</taxon>
        <taxon>Mononegavirales</taxon>
        <taxon>Filoviridae</taxon>
        <taxon>Orthomarburgvirus</taxon>
        <taxon>Orthomarburgvirus marburgense</taxon>
    </lineage>
</organism>
<accession>P35253</accession>
<accession>Q38L42</accession>
<accession>Q6T6U0</accession>
<proteinExistence type="evidence at protein level"/>
<name>VGP_MABVM</name>
<dbReference type="EMBL" id="Z12132">
    <property type="protein sequence ID" value="CAA78117.1"/>
    <property type="molecule type" value="mRNA"/>
</dbReference>
<dbReference type="EMBL" id="AY430365">
    <property type="protein sequence ID" value="AAR85463.1"/>
    <property type="molecule type" value="Genomic_RNA"/>
</dbReference>
<dbReference type="EMBL" id="AY430366">
    <property type="protein sequence ID" value="AAR85456.1"/>
    <property type="molecule type" value="Genomic_RNA"/>
</dbReference>
<dbReference type="EMBL" id="DQ217792">
    <property type="protein sequence ID" value="ABA87127.1"/>
    <property type="molecule type" value="Genomic_RNA"/>
</dbReference>
<dbReference type="PIR" id="A45705">
    <property type="entry name" value="A45705"/>
</dbReference>
<dbReference type="RefSeq" id="YP_001531156.1">
    <property type="nucleotide sequence ID" value="NC_001608.3"/>
</dbReference>
<dbReference type="SMR" id="P35253"/>
<dbReference type="GlyConnect" id="579">
    <property type="glycosylation" value="7 N-Linked glycans, 5 O-Linked glycans"/>
</dbReference>
<dbReference type="GlyCosmos" id="P35253">
    <property type="glycosylation" value="21 sites, 23 glycans"/>
</dbReference>
<dbReference type="GeneID" id="920945"/>
<dbReference type="KEGG" id="vg:920945"/>
<dbReference type="Proteomes" id="UP000007771">
    <property type="component" value="Genome"/>
</dbReference>
<dbReference type="Proteomes" id="UP000137266">
    <property type="component" value="Genome"/>
</dbReference>
<dbReference type="Proteomes" id="UP000160614">
    <property type="component" value="Genome"/>
</dbReference>
<dbReference type="Proteomes" id="UP000180448">
    <property type="component" value="Segment"/>
</dbReference>
<dbReference type="GO" id="GO:0020002">
    <property type="term" value="C:host cell plasma membrane"/>
    <property type="evidence" value="ECO:0007669"/>
    <property type="project" value="UniProtKB-SubCell"/>
</dbReference>
<dbReference type="GO" id="GO:0016020">
    <property type="term" value="C:membrane"/>
    <property type="evidence" value="ECO:0007669"/>
    <property type="project" value="UniProtKB-KW"/>
</dbReference>
<dbReference type="GO" id="GO:0019031">
    <property type="term" value="C:viral envelope"/>
    <property type="evidence" value="ECO:0007669"/>
    <property type="project" value="UniProtKB-KW"/>
</dbReference>
<dbReference type="GO" id="GO:0055036">
    <property type="term" value="C:virion membrane"/>
    <property type="evidence" value="ECO:0007669"/>
    <property type="project" value="UniProtKB-SubCell"/>
</dbReference>
<dbReference type="GO" id="GO:0039654">
    <property type="term" value="P:fusion of virus membrane with host endosome membrane"/>
    <property type="evidence" value="ECO:0007669"/>
    <property type="project" value="UniProtKB-KW"/>
</dbReference>
<dbReference type="GO" id="GO:0046718">
    <property type="term" value="P:symbiont entry into host cell"/>
    <property type="evidence" value="ECO:0007669"/>
    <property type="project" value="UniProtKB-KW"/>
</dbReference>
<dbReference type="GO" id="GO:0019062">
    <property type="term" value="P:virion attachment to host cell"/>
    <property type="evidence" value="ECO:0007669"/>
    <property type="project" value="UniProtKB-KW"/>
</dbReference>
<dbReference type="CDD" id="cd09850">
    <property type="entry name" value="Ebola-like_HR1-HR2"/>
    <property type="match status" value="1"/>
</dbReference>
<dbReference type="Gene3D" id="1.10.287.210">
    <property type="match status" value="1"/>
</dbReference>
<dbReference type="InterPro" id="IPR054584">
    <property type="entry name" value="Ebola-like_HR1-HR2"/>
</dbReference>
<dbReference type="InterPro" id="IPR014625">
    <property type="entry name" value="GPC_FiloV"/>
</dbReference>
<dbReference type="InterPro" id="IPR002561">
    <property type="entry name" value="GPC_filovir-type_extra_dom"/>
</dbReference>
<dbReference type="InterPro" id="IPR018154">
    <property type="entry name" value="TLV/ENV_coat_polyprotein"/>
</dbReference>
<dbReference type="PANTHER" id="PTHR10424">
    <property type="entry name" value="VIRAL ENVELOPE PROTEIN"/>
    <property type="match status" value="1"/>
</dbReference>
<dbReference type="Pfam" id="PF22307">
    <property type="entry name" value="Ebola-like_HR1-HR2"/>
    <property type="match status" value="1"/>
</dbReference>
<dbReference type="Pfam" id="PF01611">
    <property type="entry name" value="Filo_glycop"/>
    <property type="match status" value="1"/>
</dbReference>
<dbReference type="PIRSF" id="PIRSF036874">
    <property type="entry name" value="GPC_FiloV"/>
    <property type="match status" value="1"/>
</dbReference>
<dbReference type="SUPFAM" id="SSF58069">
    <property type="entry name" value="Virus ectodomain"/>
    <property type="match status" value="1"/>
</dbReference>
<gene>
    <name type="primary">GP</name>
</gene>
<sequence>MKTTCFLISLILIQGTKNLPILEIASNNQPQNVDSVCSGTLQKTEDVHLMGFTLSGQKVADSPLEASKRWAFRTGVPPKNVEYTEGEEAKTCYNISVTDPSGKSLLLDPPTNIRDYPKCKTIHHIQGQNPHAQGIALHLWGAFFLYDRIASTTMYRGKVFTEGNIAAMIVNKTVHKMIFSRQGQGYRHMNLTSTNKYWTSSNGTQTNDTGCFGALQEYNSTKNQTCAPSKIPPPLPTARPEIKLTSTPTDATKLNTTDPSSDDEDLATSGSGSGEREPHTTSDAVTKQGLSSTMPPTPSPQPSTPQQGGNNTNHSQDAVTELDKNNTTAQPSMPPHNTTTISTNNTSKHNFSTLSAPLQNTTNDNTQSTITENEQTSAPSITTLPPTGNPTTAKSTSSKKGPATTAPNTTNEHFTSPPPTPSSTAQHLVYFRRKRSILWREGDMFPFLDGLINAPIDFDPVPNTKTIFDESSSSGASAEEDQHASPNISLTLSYFPNINENTAYSGENENDCDAELRIWSVQEDDLAAGLSWIPFFGPGIEGLYTAVLIKNQNNLVCRLRRLANQTAKSLELLLRVTTEERTFSLINRHAIDFLLTRWGGTCKVLGPDCCIGIEDLSKNISEQIDQIKKDEQKEGTGWGLGGKWWTSDWGVLTNLGILLLLSIAVLIALSCICRIFTKYIG</sequence>
<reference key="1">
    <citation type="journal article" date="1993" name="J. Virol.">
        <title>Marburg virus gene 4 encodes the virion membrane protein, a type I transmembrane glycoprotein.</title>
        <authorList>
            <person name="Will C."/>
            <person name="Muehlberger E."/>
            <person name="Linder D."/>
            <person name="Slenczka W."/>
            <person name="Klenk H.-D."/>
            <person name="Feldmann H."/>
        </authorList>
    </citation>
    <scope>NUCLEOTIDE SEQUENCE [MRNA]</scope>
    <scope>PROTEIN SEQUENCE OF 19-37</scope>
</reference>
<reference key="2">
    <citation type="submission" date="2003-10" db="EMBL/GenBank/DDBJ databases">
        <authorList>
            <person name="Chain P.S.G."/>
            <person name="Malfatti S.A."/>
            <person name="Hajjaj A."/>
            <person name="Vergez L.M."/>
            <person name="Do L.H."/>
            <person name="Smith K.L."/>
            <person name="McCready P.M."/>
        </authorList>
    </citation>
    <scope>NUCLEOTIDE SEQUENCE [GENOMIC RNA]</scope>
    <source>
        <strain>pp3/guinea pig lethal</strain>
        <strain>pp4/guinea pig nonlethal</strain>
    </source>
</reference>
<reference key="3">
    <citation type="submission" date="2003-10" db="EMBL/GenBank/DDBJ databases">
        <authorList>
            <person name="Ichou M.A."/>
            <person name="Paragas J."/>
            <person name="Jahrling P.B."/>
            <person name="Ibrahim M.S."/>
            <person name="Lofts L."/>
            <person name="Hevey M."/>
            <person name="Schmaljohn A."/>
        </authorList>
    </citation>
    <scope>NUCLEOTIDE SEQUENCE [GENOMIC RNA]</scope>
    <source>
        <strain>pp3/guinea pig lethal</strain>
        <strain>pp4/guinea pig nonlethal</strain>
    </source>
</reference>
<reference key="4">
    <citation type="journal article" date="2006" name="J. Virol.">
        <title>Rescue of recombinant Marburg virus from cDNA is dependent on nucleocapsid protein VP30.</title>
        <authorList>
            <person name="Enterlein S."/>
            <person name="Volchkov V."/>
            <person name="Weik M."/>
            <person name="Kolesnikova L."/>
            <person name="Volchkova V."/>
            <person name="Klenk H.-D."/>
            <person name="Muehlberger E."/>
        </authorList>
    </citation>
    <scope>NUCLEOTIDE SEQUENCE [GENOMIC RNA]</scope>
</reference>
<reference key="5">
    <citation type="journal article" date="1991" name="Virology">
        <title>Glycosylation and oligomerization of the spike protein of Marburg virus.</title>
        <authorList>
            <person name="Feldmann H."/>
            <person name="Will C."/>
            <person name="Schikore M."/>
            <person name="Slenczka W."/>
            <person name="Klenk H.-D."/>
        </authorList>
    </citation>
    <scope>SUBUNIT</scope>
    <scope>GLYCOSYLATION</scope>
</reference>
<reference key="6">
    <citation type="journal article" date="1995" name="Virology">
        <title>Acylation of the Marburg virus glycoprotein.</title>
        <authorList>
            <person name="Funke C."/>
            <person name="Becker S."/>
            <person name="Dartsch H."/>
            <person name="Klenk H.-D."/>
            <person name="Muehlberger E."/>
        </authorList>
    </citation>
    <scope>PALMITOYLATION AT CYS-671 AND CYS-673</scope>
</reference>
<reference key="7">
    <citation type="journal article" date="1992" name="Glycobiology">
        <title>Carbohydrate structure of Marburg virus glycoprotein.</title>
        <authorList>
            <person name="Geyer H."/>
            <person name="Will C."/>
            <person name="Feldmann H."/>
            <person name="Klenk H.-D."/>
            <person name="Geyer R."/>
        </authorList>
    </citation>
    <scope>GLYCOSYLATION</scope>
</reference>
<reference key="8">
    <citation type="journal article" date="1995" name="J. Gen. Virol.">
        <title>The asialoglycoprotein receptor is a potential liver-specific receptor for Marburg virus.</title>
        <authorList>
            <person name="Becker S."/>
            <person name="Spiess M."/>
            <person name="Klenk H.-D."/>
        </authorList>
    </citation>
    <scope>INTERACTION WITH HUMAN ASIALOGLYCOPROTEIN RECEPTOR</scope>
</reference>
<reference key="9">
    <citation type="journal article" date="2000" name="Virology">
        <title>Proteolytic processing of Marburg virus glycoprotein.</title>
        <authorList>
            <person name="Volchkov V.E."/>
            <person name="Volchkova V.A."/>
            <person name="Stroeher U."/>
            <person name="Becker S."/>
            <person name="Dolnik O."/>
            <person name="Cieplik M."/>
            <person name="Garten W."/>
            <person name="Klenk H.-D."/>
            <person name="Feldmann H."/>
        </authorList>
    </citation>
    <scope>PROTEOLYTIC PROCESSING OF ENVELOPE GLYCOPROTEIN</scope>
    <scope>MUTAGENESIS OF LYS-434 AND ARG-435</scope>
</reference>
<reference key="10">
    <citation type="journal article" date="2002" name="Virology">
        <title>The Marburg virus surface protein GP is phosphorylated at its ectodomain.</title>
        <authorList>
            <person name="Saenger C."/>
            <person name="Muehlberger E."/>
            <person name="Loetfering B."/>
            <person name="Klenk H.-D."/>
            <person name="Becker S."/>
        </authorList>
    </citation>
    <scope>PHOSPHORYLATION</scope>
</reference>
<reference key="11">
    <citation type="journal article" date="2004" name="J. Virol.">
        <title>DC-SIGN and DC-SIGNR interact with the glycoprotein of Marburg virus and the S protein of severe acute respiratory syndrome coronavirus.</title>
        <authorList>
            <person name="Marzi A."/>
            <person name="Gramberg T."/>
            <person name="Simmons G."/>
            <person name="Moeller P."/>
            <person name="Rennekamp A.J."/>
            <person name="Krumbiegel M."/>
            <person name="Geier M."/>
            <person name="Eisemann J."/>
            <person name="Turza N."/>
            <person name="Saunier B."/>
            <person name="Steinkasserer A."/>
            <person name="Becker S."/>
            <person name="Bates P."/>
            <person name="Hofmann H."/>
            <person name="Poehlmann S."/>
        </authorList>
    </citation>
    <scope>INTERACTION WITH HUMAN CD209 AND CLEC4M</scope>
</reference>
<reference key="12">
    <citation type="journal article" date="2006" name="J. Virol.">
        <title>Tyro3 family-mediated cell entry of Ebola and Marburg viruses.</title>
        <authorList>
            <person name="Shimojima M."/>
            <person name="Takada A."/>
            <person name="Ebihara H."/>
            <person name="Neumann G."/>
            <person name="Fujioka K."/>
            <person name="Irimura T."/>
            <person name="Jones S."/>
            <person name="Feldmann H."/>
            <person name="Kawaoka Y."/>
        </authorList>
    </citation>
    <scope>FUNCTION</scope>
</reference>
<reference key="13">
    <citation type="journal article" date="2006" name="J. Biol. Chem.">
        <title>Conserved receptor-binding domains of Lake Victoria marburgvirus and Zaire ebolavirus bind a common receptor.</title>
        <authorList>
            <person name="Kuhn J.H."/>
            <person name="Radoshitzky S.R."/>
            <person name="Guth A.C."/>
            <person name="Warfield K.L."/>
            <person name="Li W."/>
            <person name="Vincent M.J."/>
            <person name="Towner J.S."/>
            <person name="Nichol S.T."/>
            <person name="Bavari S."/>
            <person name="Choe H."/>
            <person name="Aman M.J."/>
            <person name="Farzan M."/>
        </authorList>
    </citation>
    <scope>RECEPTOR-BINDING REGION</scope>
</reference>
<reference key="14">
    <citation type="journal article" date="2007" name="J. Virol.">
        <title>Role of the transmembrane domain of marburg virus surface protein GP in assembly of the viral envelope.</title>
        <authorList>
            <person name="Mittler E."/>
            <person name="Kolesnikova L."/>
            <person name="Strecker T."/>
            <person name="Garten W."/>
            <person name="Becker S."/>
        </authorList>
    </citation>
    <scope>TRANSMEMBRANE DOMAIN</scope>
</reference>
<protein>
    <recommendedName>
        <fullName>Envelope glycoprotein</fullName>
    </recommendedName>
    <alternativeName>
        <fullName>GP1,2</fullName>
        <shortName>GP</shortName>
    </alternativeName>
    <alternativeName>
        <fullName>Virion spike glycoprotein</fullName>
    </alternativeName>
    <component>
        <recommendedName>
            <fullName>GP1</fullName>
        </recommendedName>
    </component>
    <component>
        <recommendedName>
            <fullName>GP2</fullName>
        </recommendedName>
    </component>
</protein>
<organismHost>
    <name type="scientific">Chlorocebus aethiops</name>
    <name type="common">Green monkey</name>
    <name type="synonym">Cercopithecus aethiops</name>
    <dbReference type="NCBI Taxonomy" id="9534"/>
</organismHost>
<organismHost>
    <name type="scientific">Homo sapiens</name>
    <name type="common">Human</name>
    <dbReference type="NCBI Taxonomy" id="9606"/>
</organismHost>
<organismHost>
    <name type="scientific">Rousettus aegyptiacus</name>
    <name type="common">Egyptian fruit bat</name>
    <name type="synonym">Pteropus aegyptiacus</name>
    <dbReference type="NCBI Taxonomy" id="9407"/>
</organismHost>
<keyword id="KW-0165">Cleavage on pair of basic residues</keyword>
<keyword id="KW-0903">Direct protein sequencing</keyword>
<keyword id="KW-1015">Disulfide bond</keyword>
<keyword id="KW-1170">Fusion of virus membrane with host endosomal membrane</keyword>
<keyword id="KW-1168">Fusion of virus membrane with host membrane</keyword>
<keyword id="KW-0325">Glycoprotein</keyword>
<keyword id="KW-1032">Host cell membrane</keyword>
<keyword id="KW-1043">Host membrane</keyword>
<keyword id="KW-0945">Host-virus interaction</keyword>
<keyword id="KW-0449">Lipoprotein</keyword>
<keyword id="KW-0472">Membrane</keyword>
<keyword id="KW-0564">Palmitate</keyword>
<keyword id="KW-1185">Reference proteome</keyword>
<keyword id="KW-0732">Signal</keyword>
<keyword id="KW-0812">Transmembrane</keyword>
<keyword id="KW-1133">Transmembrane helix</keyword>
<keyword id="KW-1161">Viral attachment to host cell</keyword>
<keyword id="KW-0261">Viral envelope protein</keyword>
<keyword id="KW-1162">Viral penetration into host cytoplasm</keyword>
<keyword id="KW-0946">Virion</keyword>
<keyword id="KW-1160">Virus entry into host cell</keyword>
<feature type="signal peptide" evidence="10">
    <location>
        <begin position="1"/>
        <end position="18"/>
    </location>
</feature>
<feature type="chain" id="PRO_0000037515" description="Envelope glycoprotein">
    <location>
        <begin position="19"/>
        <end position="681"/>
    </location>
</feature>
<feature type="chain" id="PRO_0000314979" description="GP1" evidence="1">
    <location>
        <begin position="33"/>
        <end position="435"/>
    </location>
</feature>
<feature type="chain" id="PRO_0000314980" description="GP2" evidence="1">
    <location>
        <begin position="436"/>
        <end position="681"/>
    </location>
</feature>
<feature type="topological domain" description="Extracellular" evidence="3">
    <location>
        <begin position="19"/>
        <end position="648"/>
    </location>
</feature>
<feature type="transmembrane region" description="Helical" evidence="3">
    <location>
        <begin position="649"/>
        <end position="669"/>
    </location>
</feature>
<feature type="topological domain" description="Cytoplasmic" evidence="3">
    <location>
        <begin position="670"/>
        <end position="681"/>
    </location>
</feature>
<feature type="region of interest" description="Receptor-binding">
    <location>
        <begin position="38"/>
        <end position="188"/>
    </location>
</feature>
<feature type="region of interest" description="Disordered" evidence="4">
    <location>
        <begin position="223"/>
        <end position="427"/>
    </location>
</feature>
<feature type="region of interest" description="Mucin-like region" evidence="1">
    <location>
        <begin position="277"/>
        <end position="455"/>
    </location>
</feature>
<feature type="region of interest" description="Fusion peptide" evidence="1">
    <location>
        <begin position="529"/>
        <end position="549"/>
    </location>
</feature>
<feature type="compositionally biased region" description="Polar residues" evidence="4">
    <location>
        <begin position="244"/>
        <end position="259"/>
    </location>
</feature>
<feature type="compositionally biased region" description="Polar residues" evidence="4">
    <location>
        <begin position="281"/>
        <end position="290"/>
    </location>
</feature>
<feature type="compositionally biased region" description="Polar residues" evidence="4">
    <location>
        <begin position="308"/>
        <end position="318"/>
    </location>
</feature>
<feature type="compositionally biased region" description="Low complexity" evidence="4">
    <location>
        <begin position="337"/>
        <end position="347"/>
    </location>
</feature>
<feature type="compositionally biased region" description="Polar residues" evidence="4">
    <location>
        <begin position="348"/>
        <end position="414"/>
    </location>
</feature>
<feature type="site" description="Cleavage; by host furin" evidence="1">
    <location>
        <begin position="435"/>
        <end position="436"/>
    </location>
</feature>
<feature type="lipid moiety-binding region" description="S-palmitoyl cysteine; by host" evidence="12">
    <location>
        <position position="671"/>
    </location>
</feature>
<feature type="lipid moiety-binding region" description="S-palmitoyl cysteine; by host" evidence="12">
    <location>
        <position position="673"/>
    </location>
</feature>
<feature type="glycosylation site" description="N-linked (GlcNAc...) asparagine; by host" evidence="3">
    <location>
        <position position="94"/>
    </location>
</feature>
<feature type="glycosylation site" description="N-linked (GlcNAc...) asparagine; by host" evidence="3">
    <location>
        <position position="171"/>
    </location>
</feature>
<feature type="glycosylation site" description="N-linked (GlcNAc...) asparagine; by host" evidence="3">
    <location>
        <position position="190"/>
    </location>
</feature>
<feature type="glycosylation site" description="N-linked (GlcNAc...) asparagine; by host" evidence="3">
    <location>
        <position position="202"/>
    </location>
</feature>
<feature type="glycosylation site" description="N-linked (GlcNAc...) asparagine; by host" evidence="3">
    <location>
        <position position="207"/>
    </location>
</feature>
<feature type="glycosylation site" description="N-linked (GlcNAc...) asparagine; by host" evidence="3">
    <location>
        <position position="219"/>
    </location>
</feature>
<feature type="glycosylation site" description="N-linked (GlcNAc...) asparagine; by host" evidence="3">
    <location>
        <position position="223"/>
    </location>
</feature>
<feature type="glycosylation site" description="N-linked (GlcNAc...) asparagine; by host" evidence="3">
    <location>
        <position position="255"/>
    </location>
</feature>
<feature type="glycosylation site" description="N-linked (GlcNAc...) asparagine; by host" evidence="3">
    <location>
        <position position="310"/>
    </location>
</feature>
<feature type="glycosylation site" description="N-linked (GlcNAc...) asparagine; by host" evidence="3">
    <location>
        <position position="313"/>
    </location>
</feature>
<feature type="glycosylation site" description="N-linked (GlcNAc...) asparagine; by host" evidence="3">
    <location>
        <position position="325"/>
    </location>
</feature>
<feature type="glycosylation site" description="N-linked (GlcNAc...) asparagine; by host" evidence="3">
    <location>
        <position position="326"/>
    </location>
</feature>
<feature type="glycosylation site" description="N-linked (GlcNAc...) asparagine; by host" evidence="3">
    <location>
        <position position="337"/>
    </location>
</feature>
<feature type="glycosylation site" description="N-linked (GlcNAc...) asparagine; by host" evidence="3">
    <location>
        <position position="344"/>
    </location>
</feature>
<feature type="glycosylation site" description="N-linked (GlcNAc...) asparagine; by host" evidence="3">
    <location>
        <position position="345"/>
    </location>
</feature>
<feature type="glycosylation site" description="N-linked (GlcNAc...) asparagine; by host" evidence="3">
    <location>
        <position position="350"/>
    </location>
</feature>
<feature type="glycosylation site" description="N-linked (GlcNAc...) asparagine; by host" evidence="3">
    <location>
        <position position="360"/>
    </location>
</feature>
<feature type="glycosylation site" description="N-linked (GlcNAc...) asparagine; by host" evidence="3">
    <location>
        <position position="408"/>
    </location>
</feature>
<feature type="glycosylation site" description="N-linked (GlcNAc...) asparagine; by host" evidence="3">
    <location>
        <position position="487"/>
    </location>
</feature>
<feature type="glycosylation site" description="N-linked (GlcNAc...) asparagine; by host" evidence="3">
    <location>
        <position position="564"/>
    </location>
</feature>
<feature type="glycosylation site" description="N-linked (GlcNAc...) asparagine; by host" evidence="3">
    <location>
        <position position="619"/>
    </location>
</feature>
<feature type="disulfide bond" description="Interchain (between GP1 and GP2 chains)" evidence="1">
    <location>
        <begin position="37"/>
        <end position="610"/>
    </location>
</feature>
<feature type="disulfide bond" evidence="3">
    <location>
        <begin position="92"/>
        <end position="119"/>
    </location>
</feature>
<feature type="disulfide bond" evidence="3">
    <location>
        <begin position="211"/>
        <end position="226"/>
    </location>
</feature>
<feature type="disulfide bond" evidence="3">
    <location>
        <begin position="512"/>
        <end position="557"/>
    </location>
</feature>
<feature type="disulfide bond" evidence="1">
    <location>
        <begin position="602"/>
        <end position="609"/>
    </location>
</feature>
<feature type="sequence variant" description="In strain: pp3/guinea pig lethal and pp4/guinea pig nonlethal.">
    <original>V</original>
    <variation>G</variation>
    <location>
        <position position="547"/>
    </location>
</feature>
<feature type="mutagenesis site" description="Partial loss of cleavage between GP1 and GP2." evidence="5">
    <original>K</original>
    <variation>M</variation>
    <location>
        <position position="434"/>
    </location>
</feature>
<feature type="mutagenesis site" description="Complete loss of cleavage between GP1 and GP2." evidence="5">
    <original>R</original>
    <variation>L</variation>
    <location>
        <position position="435"/>
    </location>
</feature>
<evidence type="ECO:0000250" key="1"/>
<evidence type="ECO:0000250" key="2">
    <source>
        <dbReference type="UniProtKB" id="Q05320"/>
    </source>
</evidence>
<evidence type="ECO:0000255" key="3"/>
<evidence type="ECO:0000256" key="4">
    <source>
        <dbReference type="SAM" id="MobiDB-lite"/>
    </source>
</evidence>
<evidence type="ECO:0000269" key="5">
    <source>
    </source>
</evidence>
<evidence type="ECO:0000269" key="6">
    <source>
    </source>
</evidence>
<evidence type="ECO:0000269" key="7">
    <source>
    </source>
</evidence>
<evidence type="ECO:0000269" key="8">
    <source>
    </source>
</evidence>
<evidence type="ECO:0000269" key="9">
    <source>
    </source>
</evidence>
<evidence type="ECO:0000269" key="10">
    <source>
    </source>
</evidence>
<evidence type="ECO:0000305" key="11"/>
<evidence type="ECO:0000305" key="12">
    <source>
    </source>
</evidence>
<comment type="function">
    <text evidence="1">GP1 is responsible for binding to the receptor(s) on target cells. Interacts with CD209/DC-SIGN and CLEC4M/DC-SIGNR which act as cofactors for virus entry into the host cell. Binding to CD209 and CLEC4M, which are respectively found on dendritic cells (DCs), and on endothelial cells of liver sinusoids and lymph node sinuses, facilitate infection of macrophages and endothelial cells. These interactions not only facilitate virus cell entry, but also allow capture of viral particles by DCs and subsequent transmission to susceptible cells without DCs infection (trans infection) (By similarity).</text>
</comment>
<comment type="function">
    <text evidence="1">GP2 acts as a class I viral fusion protein. Under the current model, the protein has at least 3 conformational states: pre-fusion native state, pre-hairpin intermediate state, and post-fusion hairpin state. During viral and target cell membrane fusion, the coiled coil regions (heptad repeats) assume a trimer-of-hairpins structure, positioning the fusion peptide in close proximity to the C-terminal region of the ectodomain. The formation of this structure appears to drive apposition and subsequent fusion of viral and target cell membranes. Responsible for penetration of the virus into the cell cytoplasm by mediating the fusion of the membrane of the endocytosed virus particle with the endosomal membrane. Low pH in endosomes induces an irreversible conformational change in GP2, releasing the fusion hydrophobic peptide (By similarity).</text>
</comment>
<comment type="subunit">
    <text evidence="7 8 9">Homotrimer; each monomer consists of a GP1 and a GP2 subunit linked by disulfide bonds. The resulting peplomers (GP1,2) protrude from the virus surface as spikes. GP1,2 interacts with human CD209 and CLEC4M (collectively referred to as DC-SIGN(R)). Asialoglycoprotein receptor (ASGP-R) may be a liver-specific receptor for GP1,2. Members of the Tyro3 receptor tyrosine kinase family may be cell entry factors interacting with GP1,2.</text>
</comment>
<comment type="subcellular location">
    <molecule>GP2</molecule>
    <subcellularLocation>
        <location evidence="2">Virion membrane</location>
        <topology evidence="3">Single-pass type I membrane protein</topology>
    </subcellularLocation>
    <subcellularLocation>
        <location evidence="2">Host cell membrane</location>
        <topology evidence="3">Single-pass type I membrane protein</topology>
    </subcellularLocation>
    <text evidence="2">In the cell, localizes to the plasma membrane lipid rafts, which probably represent the assembly and budding site.</text>
</comment>
<comment type="subcellular location">
    <molecule>GP1</molecule>
    <subcellularLocation>
        <location evidence="2">Virion membrane</location>
        <topology evidence="2">Peripheral membrane protein</topology>
    </subcellularLocation>
    <subcellularLocation>
        <location evidence="2">Host cell membrane</location>
        <topology evidence="2">Peripheral membrane protein</topology>
    </subcellularLocation>
    <text evidence="2">GP1 is not anchored to the viral envelope, but forms a disulfid-linked complex with the extravirion surface GP2. In the cell, both GP1 and GP2 localize to the plasma membrane lipid rafts, which probably represent the assembly and budding site. GP1 can also be shed after proteolytic processing.</text>
</comment>
<comment type="domain">
    <text evidence="1">The coiled coil regions play a role in oligomerization and fusion activity.</text>
</comment>
<comment type="domain">
    <text>The transmembrane domain is essential and sufficient for recruitment envelope glycoproteins into VP40-enriched multivesicular bodies.</text>
</comment>
<comment type="PTM">
    <text>N-glycosylated.</text>
</comment>
<comment type="PTM">
    <text evidence="11">O-glycosylated in the mucin-like region.</text>
</comment>
<comment type="PTM">
    <text evidence="5">Specific enzymatic cleavages in vivo yield mature proteins. The precursor is processed into GP1 and GP2 by host cell furin in the trans Golgi, and maybe by other host proteases, to yield the mature GP1 and GP2 proteins. The cleavage site corresponds to the furin optimal cleavage sequence [KR]-X-[KR]-R.</text>
</comment>
<comment type="PTM">
    <text evidence="6">GP1 is phosphorylated on serine residues between residues 260 and 273.</text>
</comment>
<comment type="miscellaneous">
    <text evidence="1">Filoviruses entry requires functional lipid rafts at the host cell surface.</text>
</comment>
<comment type="miscellaneous">
    <text evidence="1">Essential for infectivity, as it is the sole viral protein expressed at the virion surface.</text>
</comment>
<comment type="similarity">
    <text evidence="11">Belongs to the filoviruses glycoprotein family.</text>
</comment>